<accession>A6Q1J2</accession>
<name>RS8_NITSB</name>
<proteinExistence type="inferred from homology"/>
<protein>
    <recommendedName>
        <fullName evidence="1">Small ribosomal subunit protein uS8</fullName>
    </recommendedName>
    <alternativeName>
        <fullName evidence="2">30S ribosomal protein S8</fullName>
    </alternativeName>
</protein>
<sequence length="134" mass="15189">MVNDIIADSITRIRNASIRGQEVTKLLYSKIVEAIVKILQEKGYIESYKVVEEGNKKFINVVLKYEEAGKKKRPVINEIKRISKPGRRIYKGKDEIKRFKNGYGTIIVSTSKGVLPNDEAYRLGVGGEVLCSVW</sequence>
<organism>
    <name type="scientific">Nitratiruptor sp. (strain SB155-2)</name>
    <dbReference type="NCBI Taxonomy" id="387092"/>
    <lineage>
        <taxon>Bacteria</taxon>
        <taxon>Pseudomonadati</taxon>
        <taxon>Campylobacterota</taxon>
        <taxon>Epsilonproteobacteria</taxon>
        <taxon>Nautiliales</taxon>
        <taxon>Nitratiruptoraceae</taxon>
        <taxon>Nitratiruptor</taxon>
    </lineage>
</organism>
<evidence type="ECO:0000255" key="1">
    <source>
        <dbReference type="HAMAP-Rule" id="MF_01302"/>
    </source>
</evidence>
<evidence type="ECO:0000305" key="2"/>
<dbReference type="EMBL" id="AP009178">
    <property type="protein sequence ID" value="BAF69351.1"/>
    <property type="molecule type" value="Genomic_DNA"/>
</dbReference>
<dbReference type="RefSeq" id="WP_012081614.1">
    <property type="nucleotide sequence ID" value="NC_009662.1"/>
</dbReference>
<dbReference type="SMR" id="A6Q1J2"/>
<dbReference type="FunCoup" id="A6Q1J2">
    <property type="interactions" value="453"/>
</dbReference>
<dbReference type="STRING" id="387092.NIS_0237"/>
<dbReference type="KEGG" id="nis:NIS_0237"/>
<dbReference type="eggNOG" id="COG0096">
    <property type="taxonomic scope" value="Bacteria"/>
</dbReference>
<dbReference type="HOGENOM" id="CLU_098428_0_2_7"/>
<dbReference type="InParanoid" id="A6Q1J2"/>
<dbReference type="OrthoDB" id="9802617at2"/>
<dbReference type="Proteomes" id="UP000001118">
    <property type="component" value="Chromosome"/>
</dbReference>
<dbReference type="GO" id="GO:1990904">
    <property type="term" value="C:ribonucleoprotein complex"/>
    <property type="evidence" value="ECO:0007669"/>
    <property type="project" value="UniProtKB-KW"/>
</dbReference>
<dbReference type="GO" id="GO:0005840">
    <property type="term" value="C:ribosome"/>
    <property type="evidence" value="ECO:0007669"/>
    <property type="project" value="UniProtKB-KW"/>
</dbReference>
<dbReference type="GO" id="GO:0019843">
    <property type="term" value="F:rRNA binding"/>
    <property type="evidence" value="ECO:0007669"/>
    <property type="project" value="UniProtKB-UniRule"/>
</dbReference>
<dbReference type="GO" id="GO:0003735">
    <property type="term" value="F:structural constituent of ribosome"/>
    <property type="evidence" value="ECO:0007669"/>
    <property type="project" value="InterPro"/>
</dbReference>
<dbReference type="GO" id="GO:0006412">
    <property type="term" value="P:translation"/>
    <property type="evidence" value="ECO:0007669"/>
    <property type="project" value="UniProtKB-UniRule"/>
</dbReference>
<dbReference type="FunFam" id="3.30.1370.30:FF:000002">
    <property type="entry name" value="30S ribosomal protein S8"/>
    <property type="match status" value="1"/>
</dbReference>
<dbReference type="FunFam" id="3.30.1490.10:FF:000001">
    <property type="entry name" value="30S ribosomal protein S8"/>
    <property type="match status" value="1"/>
</dbReference>
<dbReference type="Gene3D" id="3.30.1370.30">
    <property type="match status" value="1"/>
</dbReference>
<dbReference type="Gene3D" id="3.30.1490.10">
    <property type="match status" value="1"/>
</dbReference>
<dbReference type="HAMAP" id="MF_01302_B">
    <property type="entry name" value="Ribosomal_uS8_B"/>
    <property type="match status" value="1"/>
</dbReference>
<dbReference type="InterPro" id="IPR000630">
    <property type="entry name" value="Ribosomal_uS8"/>
</dbReference>
<dbReference type="InterPro" id="IPR047863">
    <property type="entry name" value="Ribosomal_uS8_CS"/>
</dbReference>
<dbReference type="InterPro" id="IPR035987">
    <property type="entry name" value="Ribosomal_uS8_sf"/>
</dbReference>
<dbReference type="NCBIfam" id="NF001109">
    <property type="entry name" value="PRK00136.1"/>
    <property type="match status" value="1"/>
</dbReference>
<dbReference type="PANTHER" id="PTHR11758">
    <property type="entry name" value="40S RIBOSOMAL PROTEIN S15A"/>
    <property type="match status" value="1"/>
</dbReference>
<dbReference type="Pfam" id="PF00410">
    <property type="entry name" value="Ribosomal_S8"/>
    <property type="match status" value="1"/>
</dbReference>
<dbReference type="SUPFAM" id="SSF56047">
    <property type="entry name" value="Ribosomal protein S8"/>
    <property type="match status" value="1"/>
</dbReference>
<dbReference type="PROSITE" id="PS00053">
    <property type="entry name" value="RIBOSOMAL_S8"/>
    <property type="match status" value="1"/>
</dbReference>
<reference key="1">
    <citation type="journal article" date="2007" name="Proc. Natl. Acad. Sci. U.S.A.">
        <title>Deep-sea vent epsilon-proteobacterial genomes provide insights into emergence of pathogens.</title>
        <authorList>
            <person name="Nakagawa S."/>
            <person name="Takaki Y."/>
            <person name="Shimamura S."/>
            <person name="Reysenbach A.-L."/>
            <person name="Takai K."/>
            <person name="Horikoshi K."/>
        </authorList>
    </citation>
    <scope>NUCLEOTIDE SEQUENCE [LARGE SCALE GENOMIC DNA]</scope>
    <source>
        <strain>SB155-2</strain>
    </source>
</reference>
<feature type="chain" id="PRO_0000305752" description="Small ribosomal subunit protein uS8">
    <location>
        <begin position="1"/>
        <end position="134"/>
    </location>
</feature>
<keyword id="KW-1185">Reference proteome</keyword>
<keyword id="KW-0687">Ribonucleoprotein</keyword>
<keyword id="KW-0689">Ribosomal protein</keyword>
<keyword id="KW-0694">RNA-binding</keyword>
<keyword id="KW-0699">rRNA-binding</keyword>
<comment type="function">
    <text evidence="1">One of the primary rRNA binding proteins, it binds directly to 16S rRNA central domain where it helps coordinate assembly of the platform of the 30S subunit.</text>
</comment>
<comment type="subunit">
    <text evidence="1">Part of the 30S ribosomal subunit. Contacts proteins S5 and S12.</text>
</comment>
<comment type="similarity">
    <text evidence="1">Belongs to the universal ribosomal protein uS8 family.</text>
</comment>
<gene>
    <name evidence="1" type="primary">rpsH</name>
    <name type="ordered locus">NIS_0237</name>
</gene>